<proteinExistence type="evidence at transcript level"/>
<protein>
    <recommendedName>
        <fullName>U3-lycotoxin-Ls1f</fullName>
    </recommendedName>
    <alternativeName>
        <fullName>Toxin-like structure LSTX-B17</fullName>
    </alternativeName>
</protein>
<comment type="subcellular location">
    <subcellularLocation>
        <location evidence="1">Secreted</location>
    </subcellularLocation>
</comment>
<comment type="tissue specificity">
    <text>Expressed by the venom gland.</text>
</comment>
<comment type="domain">
    <text evidence="1">The presence of a 'disulfide through disulfide knot' structurally defines this protein as a knottin.</text>
</comment>
<comment type="similarity">
    <text evidence="3">Belongs to the neurotoxin 19 (CSTX) family. 01 subfamily.</text>
</comment>
<dbReference type="EMBL" id="EU925996">
    <property type="protein sequence ID" value="ACI41328.1"/>
    <property type="molecule type" value="mRNA"/>
</dbReference>
<dbReference type="EMBL" id="FM864000">
    <property type="protein sequence ID" value="CAS03598.1"/>
    <property type="molecule type" value="mRNA"/>
</dbReference>
<dbReference type="SMR" id="B6DCR2"/>
<dbReference type="ArachnoServer" id="AS000945">
    <property type="toxin name" value="U3-lycotoxin-Ls1f"/>
</dbReference>
<dbReference type="GO" id="GO:0005576">
    <property type="term" value="C:extracellular region"/>
    <property type="evidence" value="ECO:0007669"/>
    <property type="project" value="UniProtKB-SubCell"/>
</dbReference>
<dbReference type="GO" id="GO:0090729">
    <property type="term" value="F:toxin activity"/>
    <property type="evidence" value="ECO:0007669"/>
    <property type="project" value="UniProtKB-KW"/>
</dbReference>
<dbReference type="InterPro" id="IPR019553">
    <property type="entry name" value="Spider_toxin_CSTX_knottin"/>
</dbReference>
<dbReference type="InterPro" id="IPR011142">
    <property type="entry name" value="Spider_toxin_CSTX_Knottin_CS"/>
</dbReference>
<dbReference type="Pfam" id="PF10530">
    <property type="entry name" value="Toxin_35"/>
    <property type="match status" value="1"/>
</dbReference>
<dbReference type="PROSITE" id="PS60029">
    <property type="entry name" value="SPIDER_CSTX"/>
    <property type="match status" value="1"/>
</dbReference>
<organism>
    <name type="scientific">Lycosa singoriensis</name>
    <name type="common">Wolf spider</name>
    <name type="synonym">Aranea singoriensis</name>
    <dbReference type="NCBI Taxonomy" id="434756"/>
    <lineage>
        <taxon>Eukaryota</taxon>
        <taxon>Metazoa</taxon>
        <taxon>Ecdysozoa</taxon>
        <taxon>Arthropoda</taxon>
        <taxon>Chelicerata</taxon>
        <taxon>Arachnida</taxon>
        <taxon>Araneae</taxon>
        <taxon>Araneomorphae</taxon>
        <taxon>Entelegynae</taxon>
        <taxon>Lycosoidea</taxon>
        <taxon>Lycosidae</taxon>
        <taxon>Lycosa</taxon>
    </lineage>
</organism>
<reference key="1">
    <citation type="journal article" date="2010" name="Zoology">
        <title>Transcriptome analysis of the venom glands of the Chinese wolf spider Lycosa singoriensis.</title>
        <authorList>
            <person name="Zhang Y."/>
            <person name="Chen J."/>
            <person name="Tang X."/>
            <person name="Wang F."/>
            <person name="Jiang L."/>
            <person name="Xiong X."/>
            <person name="Wang M."/>
            <person name="Rong M."/>
            <person name="Liu Z."/>
            <person name="Liang S."/>
        </authorList>
    </citation>
    <scope>NUCLEOTIDE SEQUENCE [LARGE SCALE MRNA]</scope>
    <source>
        <tissue>Venom gland</tissue>
    </source>
</reference>
<name>TX317_LYCSI</name>
<feature type="signal peptide" evidence="2">
    <location>
        <begin position="1"/>
        <end position="20"/>
    </location>
</feature>
<feature type="propeptide" id="PRO_0000401639" evidence="1">
    <location>
        <begin position="21"/>
        <end position="44"/>
    </location>
</feature>
<feature type="chain" id="PRO_0000401640" description="U3-lycotoxin-Ls1f">
    <location>
        <begin position="45"/>
        <end position="115"/>
    </location>
</feature>
<feature type="disulfide bond" evidence="1">
    <location>
        <begin position="48"/>
        <end position="63"/>
    </location>
</feature>
<feature type="disulfide bond" evidence="1">
    <location>
        <begin position="55"/>
        <end position="72"/>
    </location>
</feature>
<feature type="disulfide bond" evidence="1">
    <location>
        <begin position="62"/>
        <end position="87"/>
    </location>
</feature>
<feature type="disulfide bond" evidence="1">
    <location>
        <begin position="74"/>
        <end position="85"/>
    </location>
</feature>
<sequence>MKFVLLFGVLLVTLFSYSSAEMLDDFDQADEDELLSLIEKEEARAKECTPRFYDCSHDRNSCCRSELFKDVCTCFYPEGGDNEVCTCQQPKHLKYMEKAVDKAKKFGGKIKKWFG</sequence>
<keyword id="KW-1015">Disulfide bond</keyword>
<keyword id="KW-0960">Knottin</keyword>
<keyword id="KW-0964">Secreted</keyword>
<keyword id="KW-0732">Signal</keyword>
<keyword id="KW-0800">Toxin</keyword>
<evidence type="ECO:0000250" key="1"/>
<evidence type="ECO:0000255" key="2"/>
<evidence type="ECO:0000305" key="3"/>
<accession>B6DCR2</accession>